<reference key="1">
    <citation type="journal article" date="2005" name="J. Gen. Virol.">
        <title>A novel class of herpesvirus with bivalve hosts.</title>
        <authorList>
            <person name="Davison A.J."/>
            <person name="Trus B.L."/>
            <person name="Cheng N."/>
            <person name="Steven A.C."/>
            <person name="Watson M.S."/>
            <person name="Cunningham C."/>
            <person name="Le Deuff R.M."/>
            <person name="Renault T."/>
        </authorList>
    </citation>
    <scope>NUCLEOTIDE SEQUENCE [LARGE SCALE GENOMIC DNA]</scope>
</reference>
<accession>Q6R7E2</accession>
<gene>
    <name type="ORF">ORF87</name>
</gene>
<name>IAP2_OSHVF</name>
<dbReference type="EMBL" id="AY509253">
    <property type="protein sequence ID" value="AAS00973.1"/>
    <property type="molecule type" value="Genomic_DNA"/>
</dbReference>
<dbReference type="RefSeq" id="YP_024626.1">
    <property type="nucleotide sequence ID" value="NC_005881.2"/>
</dbReference>
<dbReference type="SMR" id="Q6R7E2"/>
<dbReference type="KEGG" id="vg:2948187"/>
<dbReference type="Proteomes" id="UP000007021">
    <property type="component" value="Segment"/>
</dbReference>
<dbReference type="GO" id="GO:0051726">
    <property type="term" value="P:regulation of cell cycle"/>
    <property type="evidence" value="ECO:0007669"/>
    <property type="project" value="TreeGrafter"/>
</dbReference>
<dbReference type="CDD" id="cd00022">
    <property type="entry name" value="BIR"/>
    <property type="match status" value="2"/>
</dbReference>
<dbReference type="Gene3D" id="1.10.1170.10">
    <property type="entry name" value="Inhibitor Of Apoptosis Protein (2mihbC-IAP-1), Chain A"/>
    <property type="match status" value="2"/>
</dbReference>
<dbReference type="InterPro" id="IPR001370">
    <property type="entry name" value="BIR_rpt"/>
</dbReference>
<dbReference type="InterPro" id="IPR050784">
    <property type="entry name" value="IAP"/>
</dbReference>
<dbReference type="PANTHER" id="PTHR10044:SF139">
    <property type="entry name" value="DEATH-ASSOCIATED INHIBITOR OF APOPTOSIS 2"/>
    <property type="match status" value="1"/>
</dbReference>
<dbReference type="PANTHER" id="PTHR10044">
    <property type="entry name" value="INHIBITOR OF APOPTOSIS"/>
    <property type="match status" value="1"/>
</dbReference>
<dbReference type="Pfam" id="PF00653">
    <property type="entry name" value="BIR"/>
    <property type="match status" value="2"/>
</dbReference>
<dbReference type="SMART" id="SM00238">
    <property type="entry name" value="BIR"/>
    <property type="match status" value="2"/>
</dbReference>
<dbReference type="SUPFAM" id="SSF57924">
    <property type="entry name" value="Inhibitor of apoptosis (IAP) repeat"/>
    <property type="match status" value="2"/>
</dbReference>
<dbReference type="PROSITE" id="PS50143">
    <property type="entry name" value="BIR_REPEAT_2"/>
    <property type="match status" value="2"/>
</dbReference>
<keyword id="KW-1185">Reference proteome</keyword>
<keyword id="KW-0677">Repeat</keyword>
<organism>
    <name type="scientific">Ostreid herpesvirus 1 (isolate France)</name>
    <name type="common">OsHV-1</name>
    <name type="synonym">Pacific oyster herpesvirus</name>
    <dbReference type="NCBI Taxonomy" id="654903"/>
    <lineage>
        <taxon>Viruses</taxon>
        <taxon>Duplodnaviria</taxon>
        <taxon>Heunggongvirae</taxon>
        <taxon>Peploviricota</taxon>
        <taxon>Herviviricetes</taxon>
        <taxon>Herpesvirales</taxon>
        <taxon>Malacoherpesviridae</taxon>
        <taxon>Ostreavirus</taxon>
        <taxon>Ostreavirus ostreidmalaco1</taxon>
        <taxon>Ostreid herpesvirus 1</taxon>
    </lineage>
</organism>
<comment type="function">
    <text>May act as an apoptosis inhibitor.</text>
</comment>
<feature type="chain" id="PRO_0000385026" description="Putative apoptosis inhibitor ORF87">
    <location>
        <begin position="1"/>
        <end position="170"/>
    </location>
</feature>
<feature type="repeat" description="BIR 1">
    <location>
        <begin position="22"/>
        <end position="92"/>
    </location>
</feature>
<feature type="repeat" description="BIR 2">
    <location>
        <begin position="104"/>
        <end position="169"/>
    </location>
</feature>
<sequence length="170" mass="20342">MDIVPISPYERMRPLRESKELRIKSFDDHRWPHKNNPVMTKNMIENYFYYIGINDKIQCVHCGGVISGFLEEDTHRISYEHRRHFPKCPVGKYRHPGYHLDAERLKSFKNWRYENIVRKMDLVAAGLFYTGIEDRCACHQCGNELYEWEAGDNPKEEHKRLFPDCKLSSY</sequence>
<organismHost>
    <name type="scientific">Magallana gigas</name>
    <name type="common">Pacific oyster</name>
    <name type="synonym">Crassostrea gigas</name>
    <dbReference type="NCBI Taxonomy" id="29159"/>
</organismHost>
<organismHost>
    <name type="scientific">Pecten maximus</name>
    <name type="common">King scallop</name>
    <name type="synonym">Pilgrim's clam</name>
    <dbReference type="NCBI Taxonomy" id="6579"/>
</organismHost>
<protein>
    <recommendedName>
        <fullName>Putative apoptosis inhibitor ORF87</fullName>
    </recommendedName>
</protein>
<proteinExistence type="predicted"/>